<keyword id="KW-1015">Disulfide bond</keyword>
<keyword id="KW-0339">Growth factor</keyword>
<keyword id="KW-0964">Secreted</keyword>
<keyword id="KW-0732">Signal</keyword>
<name>IGF2_ONCMY</name>
<reference key="1">
    <citation type="journal article" date="1992" name="Proc. Natl. Acad. Sci. U.S.A.">
        <title>Identification of a second insulin-like growth factor in a fish species.</title>
        <authorList>
            <person name="Shamblott M.J."/>
            <person name="Chen T.T."/>
        </authorList>
    </citation>
    <scope>NUCLEOTIDE SEQUENCE [MRNA]</scope>
    <source>
        <tissue>Liver</tissue>
    </source>
</reference>
<accession>Q02816</accession>
<comment type="function">
    <text evidence="2">The insulin-like growth factors, isolated from plasma, are structurally and functionally related to insulin but have a much higher growth-promoting activity. Acts as a ligand for integrin which is required for IGF2 signaling.</text>
</comment>
<comment type="subcellular location">
    <subcellularLocation>
        <location>Secreted</location>
    </subcellularLocation>
</comment>
<comment type="similarity">
    <text evidence="4">Belongs to the insulin family.</text>
</comment>
<gene>
    <name evidence="2" type="primary">igf2</name>
    <name evidence="4" type="synonym">igf-2</name>
</gene>
<dbReference type="EMBL" id="M95184">
    <property type="protein sequence ID" value="AAA49411.1"/>
    <property type="molecule type" value="mRNA"/>
</dbReference>
<dbReference type="PIR" id="B46244">
    <property type="entry name" value="B46244"/>
</dbReference>
<dbReference type="RefSeq" id="NP_001118169.1">
    <property type="nucleotide sequence ID" value="NM_001124697.1"/>
</dbReference>
<dbReference type="Ensembl" id="ENSOMYT00000028277.2">
    <property type="protein sequence ID" value="ENSOMYP00000025841.1"/>
    <property type="gene ID" value="ENSOMYG00000012223.2"/>
</dbReference>
<dbReference type="GeneID" id="100136742"/>
<dbReference type="KEGG" id="omy:100136742"/>
<dbReference type="CTD" id="324215"/>
<dbReference type="GeneTree" id="ENSGT00940000160745"/>
<dbReference type="OrthoDB" id="9449995at2759"/>
<dbReference type="Proteomes" id="UP000694395">
    <property type="component" value="Chromosome 2"/>
</dbReference>
<dbReference type="GO" id="GO:0005615">
    <property type="term" value="C:extracellular space"/>
    <property type="evidence" value="ECO:0007669"/>
    <property type="project" value="InterPro"/>
</dbReference>
<dbReference type="GO" id="GO:0008083">
    <property type="term" value="F:growth factor activity"/>
    <property type="evidence" value="ECO:0007669"/>
    <property type="project" value="UniProtKB-KW"/>
</dbReference>
<dbReference type="GO" id="GO:0005179">
    <property type="term" value="F:hormone activity"/>
    <property type="evidence" value="ECO:0007669"/>
    <property type="project" value="InterPro"/>
</dbReference>
<dbReference type="GO" id="GO:0005159">
    <property type="term" value="F:insulin-like growth factor receptor binding"/>
    <property type="evidence" value="ECO:0007669"/>
    <property type="project" value="TreeGrafter"/>
</dbReference>
<dbReference type="GO" id="GO:0005178">
    <property type="term" value="F:integrin binding"/>
    <property type="evidence" value="ECO:0000250"/>
    <property type="project" value="UniProtKB"/>
</dbReference>
<dbReference type="GO" id="GO:0043539">
    <property type="term" value="F:protein serine/threonine kinase activator activity"/>
    <property type="evidence" value="ECO:0007669"/>
    <property type="project" value="TreeGrafter"/>
</dbReference>
<dbReference type="GO" id="GO:0042104">
    <property type="term" value="P:positive regulation of activated T cell proliferation"/>
    <property type="evidence" value="ECO:0007669"/>
    <property type="project" value="TreeGrafter"/>
</dbReference>
<dbReference type="GO" id="GO:0008284">
    <property type="term" value="P:positive regulation of cell population proliferation"/>
    <property type="evidence" value="ECO:0000250"/>
    <property type="project" value="UniProtKB"/>
</dbReference>
<dbReference type="GO" id="GO:0046628">
    <property type="term" value="P:positive regulation of insulin receptor signaling pathway"/>
    <property type="evidence" value="ECO:0007669"/>
    <property type="project" value="TreeGrafter"/>
</dbReference>
<dbReference type="GO" id="GO:0043410">
    <property type="term" value="P:positive regulation of MAPK cascade"/>
    <property type="evidence" value="ECO:0007669"/>
    <property type="project" value="TreeGrafter"/>
</dbReference>
<dbReference type="GO" id="GO:0045944">
    <property type="term" value="P:positive regulation of transcription by RNA polymerase II"/>
    <property type="evidence" value="ECO:0007669"/>
    <property type="project" value="TreeGrafter"/>
</dbReference>
<dbReference type="GO" id="GO:1905564">
    <property type="term" value="P:positive regulation of vascular endothelial cell proliferation"/>
    <property type="evidence" value="ECO:0007669"/>
    <property type="project" value="TreeGrafter"/>
</dbReference>
<dbReference type="GO" id="GO:0051147">
    <property type="term" value="P:regulation of muscle cell differentiation"/>
    <property type="evidence" value="ECO:0007669"/>
    <property type="project" value="TreeGrafter"/>
</dbReference>
<dbReference type="CDD" id="cd04368">
    <property type="entry name" value="IlGF"/>
    <property type="match status" value="1"/>
</dbReference>
<dbReference type="FunFam" id="1.10.100.10:FF:000002">
    <property type="entry name" value="Insulin-like growth factor II preproprotein"/>
    <property type="match status" value="1"/>
</dbReference>
<dbReference type="Gene3D" id="1.10.100.10">
    <property type="entry name" value="Insulin-like"/>
    <property type="match status" value="1"/>
</dbReference>
<dbReference type="InterPro" id="IPR022334">
    <property type="entry name" value="IGF2"/>
</dbReference>
<dbReference type="InterPro" id="IPR013576">
    <property type="entry name" value="IGF2_C"/>
</dbReference>
<dbReference type="InterPro" id="IPR016179">
    <property type="entry name" value="Insulin-like"/>
</dbReference>
<dbReference type="InterPro" id="IPR022350">
    <property type="entry name" value="Insulin-like_growth_factor"/>
</dbReference>
<dbReference type="InterPro" id="IPR036438">
    <property type="entry name" value="Insulin-like_sf"/>
</dbReference>
<dbReference type="InterPro" id="IPR022353">
    <property type="entry name" value="Insulin_CS"/>
</dbReference>
<dbReference type="InterPro" id="IPR022352">
    <property type="entry name" value="Insulin_family"/>
</dbReference>
<dbReference type="PANTHER" id="PTHR46886">
    <property type="entry name" value="INSULIN-LIKE GROWTH FACTOR II"/>
    <property type="match status" value="1"/>
</dbReference>
<dbReference type="PANTHER" id="PTHR46886:SF1">
    <property type="entry name" value="INSULIN-LIKE GROWTH FACTOR II"/>
    <property type="match status" value="1"/>
</dbReference>
<dbReference type="Pfam" id="PF08365">
    <property type="entry name" value="IGF2_C"/>
    <property type="match status" value="1"/>
</dbReference>
<dbReference type="Pfam" id="PF00049">
    <property type="entry name" value="Insulin"/>
    <property type="match status" value="2"/>
</dbReference>
<dbReference type="PRINTS" id="PR02002">
    <property type="entry name" value="INSLNLIKEGF"/>
</dbReference>
<dbReference type="PRINTS" id="PR02006">
    <property type="entry name" value="INSLNLIKEGF2"/>
</dbReference>
<dbReference type="PRINTS" id="PR00276">
    <property type="entry name" value="INSULINFAMLY"/>
</dbReference>
<dbReference type="SMART" id="SM00078">
    <property type="entry name" value="IlGF"/>
    <property type="match status" value="1"/>
</dbReference>
<dbReference type="SUPFAM" id="SSF56994">
    <property type="entry name" value="Insulin-like"/>
    <property type="match status" value="1"/>
</dbReference>
<dbReference type="PROSITE" id="PS00262">
    <property type="entry name" value="INSULIN"/>
    <property type="match status" value="1"/>
</dbReference>
<feature type="signal peptide">
    <location>
        <begin position="1"/>
        <end status="unknown"/>
    </location>
</feature>
<feature type="propeptide" id="PRO_0000015724" evidence="1">
    <location>
        <begin status="unknown"/>
        <end position="47"/>
    </location>
</feature>
<feature type="chain" id="PRO_0000015725" description="Insulin-like growth factor 2">
    <location>
        <begin position="48"/>
        <end position="117"/>
    </location>
</feature>
<feature type="propeptide" id="PRO_0000015726" description="E peptide">
    <location>
        <begin position="118"/>
        <end position="214"/>
    </location>
</feature>
<feature type="region of interest" description="B">
    <location>
        <begin position="48"/>
        <end position="79"/>
    </location>
</feature>
<feature type="region of interest" description="C">
    <location>
        <begin position="80"/>
        <end position="90"/>
    </location>
</feature>
<feature type="region of interest" description="A">
    <location>
        <begin position="91"/>
        <end position="111"/>
    </location>
</feature>
<feature type="region of interest" description="D">
    <location>
        <begin position="112"/>
        <end position="117"/>
    </location>
</feature>
<feature type="site" description="Important for interaction with integrin" evidence="2">
    <location>
        <position position="71"/>
    </location>
</feature>
<feature type="site" description="Important for interaction with integrin" evidence="2">
    <location>
        <position position="81"/>
    </location>
</feature>
<feature type="site" description="Important for interaction with integrin" evidence="2">
    <location>
        <position position="86"/>
    </location>
</feature>
<feature type="disulfide bond" evidence="1">
    <location>
        <begin position="56"/>
        <end position="97"/>
    </location>
</feature>
<feature type="disulfide bond" evidence="1">
    <location>
        <begin position="68"/>
        <end position="110"/>
    </location>
</feature>
<feature type="disulfide bond" evidence="1">
    <location>
        <begin position="96"/>
        <end position="101"/>
    </location>
</feature>
<sequence>METQKRHEYHSVCHTCRRTENTRMKVKMMSSSNRVLVIALALTLYIVEVASAETLCGGELVDALQFVCEDRGFYFSRPTSRSNSRRSQNRGIVEECCFRSCDLNLLEQYCAKPAKSERDVSATSLQIIPMVPTIKQDVPRKHVTVKYSKYEAWQRKAAQRLRRGVPAILRARKFRRQAVKIKAQEQAMFHRPLITLPSKLPPVLPPTDNYVSHN</sequence>
<proteinExistence type="evidence at transcript level"/>
<organism>
    <name type="scientific">Oncorhynchus mykiss</name>
    <name type="common">Rainbow trout</name>
    <name type="synonym">Salmo gairdneri</name>
    <dbReference type="NCBI Taxonomy" id="8022"/>
    <lineage>
        <taxon>Eukaryota</taxon>
        <taxon>Metazoa</taxon>
        <taxon>Chordata</taxon>
        <taxon>Craniata</taxon>
        <taxon>Vertebrata</taxon>
        <taxon>Euteleostomi</taxon>
        <taxon>Actinopterygii</taxon>
        <taxon>Neopterygii</taxon>
        <taxon>Teleostei</taxon>
        <taxon>Protacanthopterygii</taxon>
        <taxon>Salmoniformes</taxon>
        <taxon>Salmonidae</taxon>
        <taxon>Salmoninae</taxon>
        <taxon>Oncorhynchus</taxon>
    </lineage>
</organism>
<evidence type="ECO:0000250" key="1"/>
<evidence type="ECO:0000250" key="2">
    <source>
        <dbReference type="UniProtKB" id="P01344"/>
    </source>
</evidence>
<evidence type="ECO:0000303" key="3">
    <source>
    </source>
</evidence>
<evidence type="ECO:0000305" key="4"/>
<protein>
    <recommendedName>
        <fullName evidence="2">Insulin-like growth factor 2</fullName>
    </recommendedName>
    <alternativeName>
        <fullName>Erythrotropin</fullName>
    </alternativeName>
    <alternativeName>
        <fullName evidence="3">Insulin-like growth factor II</fullName>
        <shortName evidence="3">IGF-II</shortName>
    </alternativeName>
</protein>